<feature type="initiator methionine" description="Removed" evidence="2">
    <location>
        <position position="1"/>
    </location>
</feature>
<feature type="chain" id="PRO_0000310164" description="Nascent polypeptide-associated complex subunit alpha">
    <location>
        <begin position="2"/>
        <end position="174"/>
    </location>
</feature>
<feature type="domain" description="NAC-A/B" evidence="3">
    <location>
        <begin position="14"/>
        <end position="78"/>
    </location>
</feature>
<feature type="domain" description="UBA">
    <location>
        <begin position="135"/>
        <end position="174"/>
    </location>
</feature>
<feature type="region of interest" description="Disordered" evidence="4">
    <location>
        <begin position="85"/>
        <end position="137"/>
    </location>
</feature>
<feature type="compositionally biased region" description="Low complexity" evidence="4">
    <location>
        <begin position="111"/>
        <end position="120"/>
    </location>
</feature>
<feature type="compositionally biased region" description="Acidic residues" evidence="4">
    <location>
        <begin position="121"/>
        <end position="132"/>
    </location>
</feature>
<feature type="modified residue" description="N-acetylserine" evidence="2">
    <location>
        <position position="2"/>
    </location>
</feature>
<feature type="modified residue" description="Phosphoserine" evidence="2">
    <location>
        <position position="93"/>
    </location>
</feature>
<protein>
    <recommendedName>
        <fullName>Nascent polypeptide-associated complex subunit alpha</fullName>
        <shortName>NAC-alpha</shortName>
    </recommendedName>
    <alternativeName>
        <fullName>Alpha-NAC</fullName>
    </alternativeName>
    <alternativeName>
        <fullName>GAL4 DNA-binding enhancer protein 2</fullName>
    </alternativeName>
</protein>
<dbReference type="EMBL" id="AAFW02000082">
    <property type="protein sequence ID" value="EDN62430.1"/>
    <property type="molecule type" value="Genomic_DNA"/>
</dbReference>
<dbReference type="SMR" id="A6ZT99"/>
<dbReference type="TopDownProteomics" id="A6ZT99"/>
<dbReference type="HOGENOM" id="CLU_057806_2_1_1"/>
<dbReference type="Proteomes" id="UP000007060">
    <property type="component" value="Unassembled WGS sequence"/>
</dbReference>
<dbReference type="GO" id="GO:0005854">
    <property type="term" value="C:nascent polypeptide-associated complex"/>
    <property type="evidence" value="ECO:0007669"/>
    <property type="project" value="InterPro"/>
</dbReference>
<dbReference type="GO" id="GO:0005634">
    <property type="term" value="C:nucleus"/>
    <property type="evidence" value="ECO:0007669"/>
    <property type="project" value="UniProtKB-SubCell"/>
</dbReference>
<dbReference type="GO" id="GO:0015031">
    <property type="term" value="P:protein transport"/>
    <property type="evidence" value="ECO:0007669"/>
    <property type="project" value="UniProtKB-KW"/>
</dbReference>
<dbReference type="CDD" id="cd22054">
    <property type="entry name" value="NAC_NACA"/>
    <property type="match status" value="1"/>
</dbReference>
<dbReference type="CDD" id="cd14278">
    <property type="entry name" value="UBA_NAC_like"/>
    <property type="match status" value="1"/>
</dbReference>
<dbReference type="FunFam" id="2.20.70.30:FF:000002">
    <property type="entry name" value="Nascent polypeptide-associated complex (NAC), alpha subunit"/>
    <property type="match status" value="1"/>
</dbReference>
<dbReference type="Gene3D" id="1.10.8.10">
    <property type="entry name" value="DNA helicase RuvA subunit, C-terminal domain"/>
    <property type="match status" value="1"/>
</dbReference>
<dbReference type="Gene3D" id="2.20.70.30">
    <property type="entry name" value="Nascent polypeptide-associated complex domain"/>
    <property type="match status" value="1"/>
</dbReference>
<dbReference type="InterPro" id="IPR016641">
    <property type="entry name" value="EGD2/NACA0like"/>
</dbReference>
<dbReference type="InterPro" id="IPR044034">
    <property type="entry name" value="NAC-like_UBA"/>
</dbReference>
<dbReference type="InterPro" id="IPR038187">
    <property type="entry name" value="NAC_A/B_dom_sf"/>
</dbReference>
<dbReference type="InterPro" id="IPR002715">
    <property type="entry name" value="Nas_poly-pep-assoc_cplx_dom"/>
</dbReference>
<dbReference type="InterPro" id="IPR009060">
    <property type="entry name" value="UBA-like_sf"/>
</dbReference>
<dbReference type="PANTHER" id="PTHR21713">
    <property type="entry name" value="NASCENT POLYPEPTIDE ASSOCIATED COMPLEX ALPHA SUBUNIT-RELATED"/>
    <property type="match status" value="1"/>
</dbReference>
<dbReference type="Pfam" id="PF01849">
    <property type="entry name" value="NAC"/>
    <property type="match status" value="1"/>
</dbReference>
<dbReference type="Pfam" id="PF19026">
    <property type="entry name" value="UBA_HYPK"/>
    <property type="match status" value="1"/>
</dbReference>
<dbReference type="PIRSF" id="PIRSF015901">
    <property type="entry name" value="NAC_alpha"/>
    <property type="match status" value="1"/>
</dbReference>
<dbReference type="SMART" id="SM01407">
    <property type="entry name" value="NAC"/>
    <property type="match status" value="1"/>
</dbReference>
<dbReference type="SUPFAM" id="SSF46934">
    <property type="entry name" value="UBA-like"/>
    <property type="match status" value="1"/>
</dbReference>
<dbReference type="PROSITE" id="PS51151">
    <property type="entry name" value="NAC_AB"/>
    <property type="match status" value="1"/>
</dbReference>
<accession>A6ZT99</accession>
<comment type="function">
    <text evidence="1">Component of the nascent polypeptide-associated complex (NAC), a dynamic component of the ribosomal exit tunnel, protecting the emerging polypeptides from interaction with other cytoplasmic proteins to ensure appropriate nascent protein targeting. The NAC complex also promotes mitochondrial protein import by enhancing productive ribosome interactions with the outer mitochondrial membrane and blocks the inappropriate interaction of ribosomes translating non-secretory nascent polypeptides with translocation sites in the membrane of the endoplasmic reticulum. EGD2 may also be involved in transcription regulation (By similarity).</text>
</comment>
<comment type="subunit">
    <text evidence="1">Part of the nascent polypeptide-associated complex (NAC), consisting of EGD2 and either EGD1 or BTT1. NAC associates with ribosomes via EGD1 or BTT1, and with the CCR4-NOT complex (By similarity).</text>
</comment>
<comment type="subcellular location">
    <subcellularLocation>
        <location evidence="1">Cytoplasm</location>
    </subcellularLocation>
    <subcellularLocation>
        <location evidence="1">Nucleus</location>
    </subcellularLocation>
    <text evidence="1">Predominantly cytoplasmic, may also transiently localize to the nucleus.</text>
</comment>
<comment type="similarity">
    <text evidence="5">Belongs to the NAC-alpha family.</text>
</comment>
<proteinExistence type="inferred from homology"/>
<reference key="1">
    <citation type="journal article" date="2007" name="Proc. Natl. Acad. Sci. U.S.A.">
        <title>Genome sequencing and comparative analysis of Saccharomyces cerevisiae strain YJM789.</title>
        <authorList>
            <person name="Wei W."/>
            <person name="McCusker J.H."/>
            <person name="Hyman R.W."/>
            <person name="Jones T."/>
            <person name="Ning Y."/>
            <person name="Cao Z."/>
            <person name="Gu Z."/>
            <person name="Bruno D."/>
            <person name="Miranda M."/>
            <person name="Nguyen M."/>
            <person name="Wilhelmy J."/>
            <person name="Komp C."/>
            <person name="Tamse R."/>
            <person name="Wang X."/>
            <person name="Jia P."/>
            <person name="Luedi P."/>
            <person name="Oefner P.J."/>
            <person name="David L."/>
            <person name="Dietrich F.S."/>
            <person name="Li Y."/>
            <person name="Davis R.W."/>
            <person name="Steinmetz L.M."/>
        </authorList>
    </citation>
    <scope>NUCLEOTIDE SEQUENCE [LARGE SCALE GENOMIC DNA]</scope>
    <source>
        <strain>YJM789</strain>
    </source>
</reference>
<evidence type="ECO:0000250" key="1"/>
<evidence type="ECO:0000250" key="2">
    <source>
        <dbReference type="UniProtKB" id="P38879"/>
    </source>
</evidence>
<evidence type="ECO:0000255" key="3">
    <source>
        <dbReference type="PROSITE-ProRule" id="PRU00507"/>
    </source>
</evidence>
<evidence type="ECO:0000256" key="4">
    <source>
        <dbReference type="SAM" id="MobiDB-lite"/>
    </source>
</evidence>
<evidence type="ECO:0000305" key="5"/>
<keyword id="KW-0007">Acetylation</keyword>
<keyword id="KW-0963">Cytoplasm</keyword>
<keyword id="KW-0539">Nucleus</keyword>
<keyword id="KW-0597">Phosphoprotein</keyword>
<keyword id="KW-0653">Protein transport</keyword>
<keyword id="KW-0813">Transport</keyword>
<organism>
    <name type="scientific">Saccharomyces cerevisiae (strain YJM789)</name>
    <name type="common">Baker's yeast</name>
    <dbReference type="NCBI Taxonomy" id="307796"/>
    <lineage>
        <taxon>Eukaryota</taxon>
        <taxon>Fungi</taxon>
        <taxon>Dikarya</taxon>
        <taxon>Ascomycota</taxon>
        <taxon>Saccharomycotina</taxon>
        <taxon>Saccharomycetes</taxon>
        <taxon>Saccharomycetales</taxon>
        <taxon>Saccharomycetaceae</taxon>
        <taxon>Saccharomyces</taxon>
    </lineage>
</organism>
<gene>
    <name type="primary">EGD2</name>
    <name type="ORF">SCY_2583</name>
</gene>
<name>NACA_YEAS7</name>
<sequence>MSAIPENANVTVLNKNEKKARELIGKLGLKQIPGIIRVTFRKKDNQIYAIEKPEVFRSAGGNYVVFGEAKVDNFTQKLAAAQQQAQASGIMPSNEDVATKSPEDIQADMQAAAEGSVNAAAEEDDEEGEVDAGDLNKDDIELVVQQTNVSKNQAIKALKAHNGDLVNAIMSLSK</sequence>